<name>RPOA_DESDA</name>
<dbReference type="EC" id="2.7.7.6" evidence="1"/>
<dbReference type="EMBL" id="CP001358">
    <property type="protein sequence ID" value="ACL48594.1"/>
    <property type="molecule type" value="Genomic_DNA"/>
</dbReference>
<dbReference type="SMR" id="B8IYL7"/>
<dbReference type="STRING" id="525146.Ddes_0686"/>
<dbReference type="KEGG" id="dds:Ddes_0686"/>
<dbReference type="eggNOG" id="COG0202">
    <property type="taxonomic scope" value="Bacteria"/>
</dbReference>
<dbReference type="HOGENOM" id="CLU_053084_0_1_7"/>
<dbReference type="GO" id="GO:0005737">
    <property type="term" value="C:cytoplasm"/>
    <property type="evidence" value="ECO:0007669"/>
    <property type="project" value="UniProtKB-ARBA"/>
</dbReference>
<dbReference type="GO" id="GO:0000428">
    <property type="term" value="C:DNA-directed RNA polymerase complex"/>
    <property type="evidence" value="ECO:0007669"/>
    <property type="project" value="UniProtKB-KW"/>
</dbReference>
<dbReference type="GO" id="GO:0003677">
    <property type="term" value="F:DNA binding"/>
    <property type="evidence" value="ECO:0007669"/>
    <property type="project" value="UniProtKB-UniRule"/>
</dbReference>
<dbReference type="GO" id="GO:0003899">
    <property type="term" value="F:DNA-directed RNA polymerase activity"/>
    <property type="evidence" value="ECO:0007669"/>
    <property type="project" value="UniProtKB-UniRule"/>
</dbReference>
<dbReference type="GO" id="GO:0046983">
    <property type="term" value="F:protein dimerization activity"/>
    <property type="evidence" value="ECO:0007669"/>
    <property type="project" value="InterPro"/>
</dbReference>
<dbReference type="GO" id="GO:0006351">
    <property type="term" value="P:DNA-templated transcription"/>
    <property type="evidence" value="ECO:0007669"/>
    <property type="project" value="UniProtKB-UniRule"/>
</dbReference>
<dbReference type="CDD" id="cd06928">
    <property type="entry name" value="RNAP_alpha_NTD"/>
    <property type="match status" value="1"/>
</dbReference>
<dbReference type="FunFam" id="1.10.150.20:FF:000001">
    <property type="entry name" value="DNA-directed RNA polymerase subunit alpha"/>
    <property type="match status" value="1"/>
</dbReference>
<dbReference type="FunFam" id="2.170.120.12:FF:000001">
    <property type="entry name" value="DNA-directed RNA polymerase subunit alpha"/>
    <property type="match status" value="1"/>
</dbReference>
<dbReference type="Gene3D" id="1.10.150.20">
    <property type="entry name" value="5' to 3' exonuclease, C-terminal subdomain"/>
    <property type="match status" value="1"/>
</dbReference>
<dbReference type="Gene3D" id="2.170.120.12">
    <property type="entry name" value="DNA-directed RNA polymerase, insert domain"/>
    <property type="match status" value="1"/>
</dbReference>
<dbReference type="Gene3D" id="3.30.1360.10">
    <property type="entry name" value="RNA polymerase, RBP11-like subunit"/>
    <property type="match status" value="1"/>
</dbReference>
<dbReference type="HAMAP" id="MF_00059">
    <property type="entry name" value="RNApol_bact_RpoA"/>
    <property type="match status" value="1"/>
</dbReference>
<dbReference type="InterPro" id="IPR011262">
    <property type="entry name" value="DNA-dir_RNA_pol_insert"/>
</dbReference>
<dbReference type="InterPro" id="IPR011263">
    <property type="entry name" value="DNA-dir_RNA_pol_RpoA/D/Rpb3"/>
</dbReference>
<dbReference type="InterPro" id="IPR011773">
    <property type="entry name" value="DNA-dir_RpoA"/>
</dbReference>
<dbReference type="InterPro" id="IPR036603">
    <property type="entry name" value="RBP11-like"/>
</dbReference>
<dbReference type="InterPro" id="IPR011260">
    <property type="entry name" value="RNAP_asu_C"/>
</dbReference>
<dbReference type="InterPro" id="IPR036643">
    <property type="entry name" value="RNApol_insert_sf"/>
</dbReference>
<dbReference type="NCBIfam" id="NF003513">
    <property type="entry name" value="PRK05182.1-2"/>
    <property type="match status" value="1"/>
</dbReference>
<dbReference type="NCBIfam" id="NF003519">
    <property type="entry name" value="PRK05182.2-5"/>
    <property type="match status" value="1"/>
</dbReference>
<dbReference type="NCBIfam" id="TIGR02027">
    <property type="entry name" value="rpoA"/>
    <property type="match status" value="1"/>
</dbReference>
<dbReference type="Pfam" id="PF01000">
    <property type="entry name" value="RNA_pol_A_bac"/>
    <property type="match status" value="1"/>
</dbReference>
<dbReference type="Pfam" id="PF03118">
    <property type="entry name" value="RNA_pol_A_CTD"/>
    <property type="match status" value="1"/>
</dbReference>
<dbReference type="Pfam" id="PF01193">
    <property type="entry name" value="RNA_pol_L"/>
    <property type="match status" value="2"/>
</dbReference>
<dbReference type="SMART" id="SM00662">
    <property type="entry name" value="RPOLD"/>
    <property type="match status" value="1"/>
</dbReference>
<dbReference type="SUPFAM" id="SSF47789">
    <property type="entry name" value="C-terminal domain of RNA polymerase alpha subunit"/>
    <property type="match status" value="1"/>
</dbReference>
<dbReference type="SUPFAM" id="SSF56553">
    <property type="entry name" value="Insert subdomain of RNA polymerase alpha subunit"/>
    <property type="match status" value="1"/>
</dbReference>
<dbReference type="SUPFAM" id="SSF55257">
    <property type="entry name" value="RBP11-like subunits of RNA polymerase"/>
    <property type="match status" value="1"/>
</dbReference>
<comment type="function">
    <text evidence="1">DNA-dependent RNA polymerase catalyzes the transcription of DNA into RNA using the four ribonucleoside triphosphates as substrates.</text>
</comment>
<comment type="catalytic activity">
    <reaction evidence="1">
        <text>RNA(n) + a ribonucleoside 5'-triphosphate = RNA(n+1) + diphosphate</text>
        <dbReference type="Rhea" id="RHEA:21248"/>
        <dbReference type="Rhea" id="RHEA-COMP:14527"/>
        <dbReference type="Rhea" id="RHEA-COMP:17342"/>
        <dbReference type="ChEBI" id="CHEBI:33019"/>
        <dbReference type="ChEBI" id="CHEBI:61557"/>
        <dbReference type="ChEBI" id="CHEBI:140395"/>
        <dbReference type="EC" id="2.7.7.6"/>
    </reaction>
</comment>
<comment type="subunit">
    <text evidence="1">Homodimer. The RNAP catalytic core consists of 2 alpha, 1 beta, 1 beta' and 1 omega subunit. When a sigma factor is associated with the core the holoenzyme is formed, which can initiate transcription.</text>
</comment>
<comment type="domain">
    <text evidence="1">The N-terminal domain is essential for RNAP assembly and basal transcription, whereas the C-terminal domain is involved in interaction with transcriptional regulators and with upstream promoter elements.</text>
</comment>
<comment type="similarity">
    <text evidence="1">Belongs to the RNA polymerase alpha chain family.</text>
</comment>
<sequence>MLIKQGERLINARNWSELVKPDQILREEETASGTHGKFVCEPLERGYGTTIGNAMRRVLLASLQGAAFVSVKIIGVQHEFTTIHGVLEDITDVILNIKQVRLRMDTEEPQRLTLRVERKGPVTAADIVANQHVEVLNPDLHIATLTEDVVLEMELEVRMGKGYVPADMHEGLADEIGLIKLDSSFSPVRKVAYTVEQARVGQMTNYDRLLLEVWTDGSLTPEDAIAYSAKIIKDQISVFINFDERVSGDMRNGSGESGEVNEHLFKSIDDLELSVRATNCLRSANIGLVGELVQRTEAEMLKTKNFGRKSLDEIKGVLLGMGLDFGMKVDSFDKKYQEWKRKQQNEA</sequence>
<protein>
    <recommendedName>
        <fullName evidence="1">DNA-directed RNA polymerase subunit alpha</fullName>
        <shortName evidence="1">RNAP subunit alpha</shortName>
        <ecNumber evidence="1">2.7.7.6</ecNumber>
    </recommendedName>
    <alternativeName>
        <fullName evidence="1">RNA polymerase subunit alpha</fullName>
    </alternativeName>
    <alternativeName>
        <fullName evidence="1">Transcriptase subunit alpha</fullName>
    </alternativeName>
</protein>
<feature type="chain" id="PRO_1000196634" description="DNA-directed RNA polymerase subunit alpha">
    <location>
        <begin position="1"/>
        <end position="347"/>
    </location>
</feature>
<feature type="region of interest" description="Alpha N-terminal domain (alpha-NTD)" evidence="1">
    <location>
        <begin position="1"/>
        <end position="243"/>
    </location>
</feature>
<feature type="region of interest" description="Alpha C-terminal domain (alpha-CTD)" evidence="1">
    <location>
        <begin position="260"/>
        <end position="347"/>
    </location>
</feature>
<accession>B8IYL7</accession>
<reference key="1">
    <citation type="submission" date="2009-01" db="EMBL/GenBank/DDBJ databases">
        <title>Complete sequence of Desulfovibrio desulfuricans subsp. desulfuricans str. ATCC 27774.</title>
        <authorList>
            <consortium name="US DOE Joint Genome Institute"/>
            <person name="Lucas S."/>
            <person name="Copeland A."/>
            <person name="Lapidus A."/>
            <person name="Glavina del Rio T."/>
            <person name="Tice H."/>
            <person name="Bruce D."/>
            <person name="Goodwin L."/>
            <person name="Pitluck S."/>
            <person name="Sims D."/>
            <person name="Lu M."/>
            <person name="Kiss H."/>
            <person name="Meineke L."/>
            <person name="Brettin T."/>
            <person name="Detter J.C."/>
            <person name="Han C."/>
            <person name="Larimer F."/>
            <person name="Land M."/>
            <person name="Hauser L."/>
            <person name="Kyrpides N."/>
            <person name="Ovchinnikova G."/>
            <person name="Hazen T.C."/>
        </authorList>
    </citation>
    <scope>NUCLEOTIDE SEQUENCE [LARGE SCALE GENOMIC DNA]</scope>
    <source>
        <strain>ATCC 27774 / DSM 6949 / MB</strain>
    </source>
</reference>
<evidence type="ECO:0000255" key="1">
    <source>
        <dbReference type="HAMAP-Rule" id="MF_00059"/>
    </source>
</evidence>
<organism>
    <name type="scientific">Desulfovibrio desulfuricans (strain ATCC 27774 / DSM 6949 / MB)</name>
    <dbReference type="NCBI Taxonomy" id="525146"/>
    <lineage>
        <taxon>Bacteria</taxon>
        <taxon>Pseudomonadati</taxon>
        <taxon>Thermodesulfobacteriota</taxon>
        <taxon>Desulfovibrionia</taxon>
        <taxon>Desulfovibrionales</taxon>
        <taxon>Desulfovibrionaceae</taxon>
        <taxon>Desulfovibrio</taxon>
    </lineage>
</organism>
<gene>
    <name evidence="1" type="primary">rpoA</name>
    <name type="ordered locus">Ddes_0686</name>
</gene>
<keyword id="KW-0240">DNA-directed RNA polymerase</keyword>
<keyword id="KW-0548">Nucleotidyltransferase</keyword>
<keyword id="KW-0804">Transcription</keyword>
<keyword id="KW-0808">Transferase</keyword>
<proteinExistence type="inferred from homology"/>